<name>VGC_BPPHK</name>
<feature type="chain" id="PRO_0000164874" description="C protein">
    <location>
        <begin position="1"/>
        <end position="68"/>
    </location>
</feature>
<reference key="1">
    <citation type="journal article" date="1996" name="J. Biochem.">
        <title>The virion proteins encoded by bacteriophage phi K and its host-range mutant phi KhT: host-range determination and DNA binding properties.</title>
        <authorList>
            <person name="Kodaira K."/>
            <person name="Oki M."/>
            <person name="Kakikawa M."/>
            <person name="Kimoto H."/>
            <person name="Taketo A."/>
        </authorList>
    </citation>
    <scope>NUCLEOTIDE SEQUENCE [GENOMIC DNA] (PHI-K AND MUTANT PHI KHT)</scope>
</reference>
<organism>
    <name type="scientific">Enterobacteria phage phiK</name>
    <name type="common">Bacteriophage phi-K</name>
    <dbReference type="NCBI Taxonomy" id="10848"/>
    <lineage>
        <taxon>Viruses</taxon>
        <taxon>Monodnaviria</taxon>
        <taxon>Sangervirae</taxon>
        <taxon>Phixviricota</taxon>
        <taxon>Malgrandaviricetes</taxon>
        <taxon>Petitvirales</taxon>
        <taxon>Microviridae</taxon>
        <taxon>Bullavirinae</taxon>
        <taxon>Alphatrevirus</taxon>
    </lineage>
</organism>
<organismHost>
    <name type="scientific">Escherichia coli</name>
    <dbReference type="NCBI Taxonomy" id="562"/>
</organismHost>
<accession>Q38037</accession>
<protein>
    <recommendedName>
        <fullName>C protein</fullName>
    </recommendedName>
</protein>
<comment type="function">
    <text>C protein is one of the proteins involved in the production and packaging of viral single-stranded DNA.</text>
</comment>
<comment type="miscellaneous">
    <text>Phi KhT, a host-range mutant of phi K, can grow on E.coli C and B, besides K12, and is more thermosensitive than the parental phage phi K.</text>
</comment>
<gene>
    <name type="primary">C</name>
</gene>
<sequence length="68" mass="8323">MLSSTRYYASYRATLTKQLMFLTKADFTNDDEKWLNAFGNLLRQWFQIEDWKGNHKKLLDDLKRRDYL</sequence>
<dbReference type="EMBL" id="X60323">
    <property type="protein sequence ID" value="CAA42886.1"/>
    <property type="molecule type" value="Genomic_DNA"/>
</dbReference>
<dbReference type="RefSeq" id="NP_043945.1">
    <property type="nucleotide sequence ID" value="NC_001730.1"/>
</dbReference>
<dbReference type="GeneID" id="1261194"/>
<dbReference type="KEGG" id="vg:1261194"/>
<dbReference type="Proteomes" id="UP000002122">
    <property type="component" value="Segment"/>
</dbReference>
<dbReference type="GO" id="GO:0019073">
    <property type="term" value="P:viral DNA genome packaging"/>
    <property type="evidence" value="ECO:0007669"/>
    <property type="project" value="InterPro"/>
</dbReference>
<dbReference type="InterPro" id="IPR016407">
    <property type="entry name" value="C-protein"/>
</dbReference>
<dbReference type="Pfam" id="PF12025">
    <property type="entry name" value="Phage_C"/>
    <property type="match status" value="1"/>
</dbReference>
<dbReference type="PIRSF" id="PIRSF004155">
    <property type="entry name" value="Phage_C"/>
    <property type="match status" value="1"/>
</dbReference>
<proteinExistence type="predicted"/>